<dbReference type="EC" id="3.2.2.-" evidence="1"/>
<dbReference type="EMBL" id="CR628337">
    <property type="protein sequence ID" value="CAH15132.1"/>
    <property type="molecule type" value="Genomic_DNA"/>
</dbReference>
<dbReference type="RefSeq" id="WP_011215043.1">
    <property type="nucleotide sequence ID" value="NC_006369.1"/>
</dbReference>
<dbReference type="SMR" id="Q5WY41"/>
<dbReference type="KEGG" id="lpf:lpl0898"/>
<dbReference type="LegioList" id="lpl0898"/>
<dbReference type="HOGENOM" id="CLU_060471_4_1_6"/>
<dbReference type="Proteomes" id="UP000002517">
    <property type="component" value="Chromosome"/>
</dbReference>
<dbReference type="GO" id="GO:0003905">
    <property type="term" value="F:alkylbase DNA N-glycosylase activity"/>
    <property type="evidence" value="ECO:0007669"/>
    <property type="project" value="InterPro"/>
</dbReference>
<dbReference type="GO" id="GO:0003677">
    <property type="term" value="F:DNA binding"/>
    <property type="evidence" value="ECO:0007669"/>
    <property type="project" value="InterPro"/>
</dbReference>
<dbReference type="GO" id="GO:0006284">
    <property type="term" value="P:base-excision repair"/>
    <property type="evidence" value="ECO:0007669"/>
    <property type="project" value="InterPro"/>
</dbReference>
<dbReference type="CDD" id="cd00540">
    <property type="entry name" value="AAG"/>
    <property type="match status" value="1"/>
</dbReference>
<dbReference type="FunFam" id="3.10.300.10:FF:000001">
    <property type="entry name" value="Putative 3-methyladenine DNA glycosylase"/>
    <property type="match status" value="1"/>
</dbReference>
<dbReference type="Gene3D" id="3.10.300.10">
    <property type="entry name" value="Methylpurine-DNA glycosylase (MPG)"/>
    <property type="match status" value="1"/>
</dbReference>
<dbReference type="HAMAP" id="MF_00527">
    <property type="entry name" value="3MGH"/>
    <property type="match status" value="1"/>
</dbReference>
<dbReference type="InterPro" id="IPR011034">
    <property type="entry name" value="Formyl_transferase-like_C_sf"/>
</dbReference>
<dbReference type="InterPro" id="IPR003180">
    <property type="entry name" value="MPG"/>
</dbReference>
<dbReference type="InterPro" id="IPR036995">
    <property type="entry name" value="MPG_sf"/>
</dbReference>
<dbReference type="NCBIfam" id="TIGR00567">
    <property type="entry name" value="3mg"/>
    <property type="match status" value="1"/>
</dbReference>
<dbReference type="PANTHER" id="PTHR10429">
    <property type="entry name" value="DNA-3-METHYLADENINE GLYCOSYLASE"/>
    <property type="match status" value="1"/>
</dbReference>
<dbReference type="PANTHER" id="PTHR10429:SF0">
    <property type="entry name" value="DNA-3-METHYLADENINE GLYCOSYLASE"/>
    <property type="match status" value="1"/>
</dbReference>
<dbReference type="Pfam" id="PF02245">
    <property type="entry name" value="Pur_DNA_glyco"/>
    <property type="match status" value="1"/>
</dbReference>
<dbReference type="SUPFAM" id="SSF50486">
    <property type="entry name" value="FMT C-terminal domain-like"/>
    <property type="match status" value="1"/>
</dbReference>
<protein>
    <recommendedName>
        <fullName evidence="1">Putative 3-methyladenine DNA glycosylase</fullName>
        <ecNumber evidence="1">3.2.2.-</ecNumber>
    </recommendedName>
</protein>
<accession>Q5WY41</accession>
<feature type="chain" id="PRO_0000265030" description="Putative 3-methyladenine DNA glycosylase">
    <location>
        <begin position="1"/>
        <end position="183"/>
    </location>
</feature>
<sequence length="183" mass="20960">MRKLPRPFYERDTVLVAKELLGKYLVHHDGLEEKIGRIVEVEAYLGQHDLACHSSKGLTKRTKVMFGPAGYAYVYLIYGMYYCMNVVTEKEGVGSAVLIRALEPIKNIQDRTQGPGLLSKAMRIDSKLNHRDLLSNDFYIAEPYGPTDFTIIEKPRIGVHYAKEWADALLRFYIKDNPYISKT</sequence>
<name>3MGH_LEGPL</name>
<evidence type="ECO:0000255" key="1">
    <source>
        <dbReference type="HAMAP-Rule" id="MF_00527"/>
    </source>
</evidence>
<gene>
    <name type="ordered locus">lpl0898</name>
</gene>
<reference key="1">
    <citation type="journal article" date="2004" name="Nat. Genet.">
        <title>Evidence in the Legionella pneumophila genome for exploitation of host cell functions and high genome plasticity.</title>
        <authorList>
            <person name="Cazalet C."/>
            <person name="Rusniok C."/>
            <person name="Brueggemann H."/>
            <person name="Zidane N."/>
            <person name="Magnier A."/>
            <person name="Ma L."/>
            <person name="Tichit M."/>
            <person name="Jarraud S."/>
            <person name="Bouchier C."/>
            <person name="Vandenesch F."/>
            <person name="Kunst F."/>
            <person name="Etienne J."/>
            <person name="Glaser P."/>
            <person name="Buchrieser C."/>
        </authorList>
    </citation>
    <scope>NUCLEOTIDE SEQUENCE [LARGE SCALE GENOMIC DNA]</scope>
    <source>
        <strain>Lens</strain>
    </source>
</reference>
<keyword id="KW-0227">DNA damage</keyword>
<keyword id="KW-0234">DNA repair</keyword>
<keyword id="KW-0378">Hydrolase</keyword>
<proteinExistence type="inferred from homology"/>
<comment type="similarity">
    <text evidence="1">Belongs to the DNA glycosylase MPG family.</text>
</comment>
<organism>
    <name type="scientific">Legionella pneumophila (strain Lens)</name>
    <dbReference type="NCBI Taxonomy" id="297245"/>
    <lineage>
        <taxon>Bacteria</taxon>
        <taxon>Pseudomonadati</taxon>
        <taxon>Pseudomonadota</taxon>
        <taxon>Gammaproteobacteria</taxon>
        <taxon>Legionellales</taxon>
        <taxon>Legionellaceae</taxon>
        <taxon>Legionella</taxon>
    </lineage>
</organism>